<name>YP264_YEAST</name>
<gene>
    <name type="ordered locus">YPL264C</name>
</gene>
<organism>
    <name type="scientific">Saccharomyces cerevisiae (strain ATCC 204508 / S288c)</name>
    <name type="common">Baker's yeast</name>
    <dbReference type="NCBI Taxonomy" id="559292"/>
    <lineage>
        <taxon>Eukaryota</taxon>
        <taxon>Fungi</taxon>
        <taxon>Dikarya</taxon>
        <taxon>Ascomycota</taxon>
        <taxon>Saccharomycotina</taxon>
        <taxon>Saccharomycetes</taxon>
        <taxon>Saccharomycetales</taxon>
        <taxon>Saccharomycetaceae</taxon>
        <taxon>Saccharomyces</taxon>
    </lineage>
</organism>
<protein>
    <recommendedName>
        <fullName>Probable transport protein YPL264C</fullName>
    </recommendedName>
</protein>
<keyword id="KW-0472">Membrane</keyword>
<keyword id="KW-1185">Reference proteome</keyword>
<keyword id="KW-0677">Repeat</keyword>
<keyword id="KW-0812">Transmembrane</keyword>
<keyword id="KW-1133">Transmembrane helix</keyword>
<sequence length="353" mass="39703">MTLQRISKDYLKPNYGLILLIVSYFFNSSMVVSTKVLENDPLETSQSRINPLQILLVRMSITYCCTLVYMHWNKQSVPDIPWGPAPCRKWLILRGIMGFFGVFGMYFSLMYLSISDAVLITFMSPTLTIFLSFLLLGEPFSKLEALGSLISFSGVVLIIRPTFLFGEQTQGQQSPQDDIVETQNPKLRLIAIGVSLLGVCGLSSVYIIIRYIGNKAHAIMSVSYFSLVTTVVAALGVLLIPSMSLQLPHSWKQWGLFLNLGISGFIHQILLTMGIQRERAGRGSLMTYTQVIYAVFWDVVLFHHWPNIWTWCGMAVIVSSTIWVINMRASKQNVVATAELLSTSDFELDDLED</sequence>
<proteinExistence type="evidence at protein level"/>
<dbReference type="EMBL" id="Z73620">
    <property type="protein sequence ID" value="CAA97999.1"/>
    <property type="molecule type" value="Genomic_DNA"/>
</dbReference>
<dbReference type="EMBL" id="AY692592">
    <property type="protein sequence ID" value="AAT92611.1"/>
    <property type="molecule type" value="Genomic_DNA"/>
</dbReference>
<dbReference type="EMBL" id="BK006949">
    <property type="protein sequence ID" value="DAA11172.1"/>
    <property type="molecule type" value="Genomic_DNA"/>
</dbReference>
<dbReference type="PIR" id="S65297">
    <property type="entry name" value="S65297"/>
</dbReference>
<dbReference type="RefSeq" id="NP_015059.1">
    <property type="nucleotide sequence ID" value="NM_001184078.1"/>
</dbReference>
<dbReference type="SMR" id="Q08980"/>
<dbReference type="BioGRID" id="35949">
    <property type="interactions" value="75"/>
</dbReference>
<dbReference type="DIP" id="DIP-8870N"/>
<dbReference type="FunCoup" id="Q08980">
    <property type="interactions" value="149"/>
</dbReference>
<dbReference type="IntAct" id="Q08980">
    <property type="interactions" value="1"/>
</dbReference>
<dbReference type="STRING" id="4932.YPL264C"/>
<dbReference type="PaxDb" id="4932-YPL264C"/>
<dbReference type="PeptideAtlas" id="Q08980"/>
<dbReference type="EnsemblFungi" id="YPL264C_mRNA">
    <property type="protein sequence ID" value="YPL264C"/>
    <property type="gene ID" value="YPL264C"/>
</dbReference>
<dbReference type="GeneID" id="855864"/>
<dbReference type="KEGG" id="sce:YPL264C"/>
<dbReference type="AGR" id="SGD:S000006185"/>
<dbReference type="SGD" id="S000006185">
    <property type="gene designation" value="YPL264C"/>
</dbReference>
<dbReference type="VEuPathDB" id="FungiDB:YPL264C"/>
<dbReference type="eggNOG" id="KOG4510">
    <property type="taxonomic scope" value="Eukaryota"/>
</dbReference>
<dbReference type="GeneTree" id="ENSGT00940000153249"/>
<dbReference type="HOGENOM" id="CLU_032828_4_1_1"/>
<dbReference type="InParanoid" id="Q08980"/>
<dbReference type="OMA" id="WYSMMYI"/>
<dbReference type="OrthoDB" id="306876at2759"/>
<dbReference type="BioCyc" id="YEAST:G3O-34147-MONOMER"/>
<dbReference type="BioGRID-ORCS" id="855864">
    <property type="hits" value="0 hits in 10 CRISPR screens"/>
</dbReference>
<dbReference type="PRO" id="PR:Q08980"/>
<dbReference type="Proteomes" id="UP000002311">
    <property type="component" value="Chromosome XVI"/>
</dbReference>
<dbReference type="RNAct" id="Q08980">
    <property type="molecule type" value="protein"/>
</dbReference>
<dbReference type="GO" id="GO:0005783">
    <property type="term" value="C:endoplasmic reticulum"/>
    <property type="evidence" value="ECO:0000314"/>
    <property type="project" value="SGD"/>
</dbReference>
<dbReference type="GO" id="GO:0016020">
    <property type="term" value="C:membrane"/>
    <property type="evidence" value="ECO:0000255"/>
    <property type="project" value="SGD"/>
</dbReference>
<dbReference type="InterPro" id="IPR000620">
    <property type="entry name" value="EamA_dom"/>
</dbReference>
<dbReference type="PANTHER" id="PTHR22911">
    <property type="entry name" value="ACYL-MALONYL CONDENSING ENZYME-RELATED"/>
    <property type="match status" value="1"/>
</dbReference>
<dbReference type="PANTHER" id="PTHR22911:SF6">
    <property type="entry name" value="SOLUTE CARRIER FAMILY 35 MEMBER G1"/>
    <property type="match status" value="1"/>
</dbReference>
<dbReference type="Pfam" id="PF00892">
    <property type="entry name" value="EamA"/>
    <property type="match status" value="2"/>
</dbReference>
<dbReference type="SUPFAM" id="SSF103481">
    <property type="entry name" value="Multidrug resistance efflux transporter EmrE"/>
    <property type="match status" value="2"/>
</dbReference>
<comment type="subcellular location">
    <subcellularLocation>
        <location>Membrane</location>
        <topology>Multi-pass membrane protein</topology>
    </subcellularLocation>
</comment>
<accession>Q08980</accession>
<accession>D6W3A6</accession>
<evidence type="ECO:0000255" key="1"/>
<feature type="chain" id="PRO_0000252279" description="Probable transport protein YPL264C">
    <location>
        <begin position="1"/>
        <end position="353"/>
    </location>
</feature>
<feature type="topological domain" description="Cytoplasmic" evidence="1">
    <location>
        <begin position="1"/>
        <end position="16"/>
    </location>
</feature>
<feature type="transmembrane region" description="Helical" evidence="1">
    <location>
        <begin position="17"/>
        <end position="37"/>
    </location>
</feature>
<feature type="topological domain" description="Extracellular" evidence="1">
    <location>
        <begin position="38"/>
        <end position="51"/>
    </location>
</feature>
<feature type="transmembrane region" description="Helical" evidence="1">
    <location>
        <begin position="52"/>
        <end position="69"/>
    </location>
</feature>
<feature type="topological domain" description="Cytoplasmic" evidence="1">
    <location>
        <begin position="70"/>
        <end position="94"/>
    </location>
</feature>
<feature type="transmembrane region" description="Helical" evidence="1">
    <location>
        <begin position="95"/>
        <end position="115"/>
    </location>
</feature>
<feature type="topological domain" description="Extracellular" evidence="1">
    <location>
        <position position="116"/>
    </location>
</feature>
<feature type="transmembrane region" description="Helical" evidence="1">
    <location>
        <begin position="117"/>
        <end position="137"/>
    </location>
</feature>
<feature type="topological domain" description="Cytoplasmic" evidence="1">
    <location>
        <begin position="138"/>
        <end position="144"/>
    </location>
</feature>
<feature type="transmembrane region" description="Helical" evidence="1">
    <location>
        <begin position="145"/>
        <end position="165"/>
    </location>
</feature>
<feature type="topological domain" description="Extracellular" evidence="1">
    <location>
        <begin position="166"/>
        <end position="188"/>
    </location>
</feature>
<feature type="transmembrane region" description="Helical" evidence="1">
    <location>
        <begin position="189"/>
        <end position="209"/>
    </location>
</feature>
<feature type="topological domain" description="Cytoplasmic" evidence="1">
    <location>
        <begin position="210"/>
        <end position="218"/>
    </location>
</feature>
<feature type="transmembrane region" description="Helical" evidence="1">
    <location>
        <begin position="219"/>
        <end position="239"/>
    </location>
</feature>
<feature type="topological domain" description="Extracellular" evidence="1">
    <location>
        <begin position="240"/>
        <end position="254"/>
    </location>
</feature>
<feature type="transmembrane region" description="Helical" evidence="1">
    <location>
        <begin position="255"/>
        <end position="275"/>
    </location>
</feature>
<feature type="topological domain" description="Cytoplasmic" evidence="1">
    <location>
        <begin position="276"/>
        <end position="282"/>
    </location>
</feature>
<feature type="transmembrane region" description="Helical" evidence="1">
    <location>
        <begin position="283"/>
        <end position="303"/>
    </location>
</feature>
<feature type="topological domain" description="Extracellular" evidence="1">
    <location>
        <position position="304"/>
    </location>
</feature>
<feature type="transmembrane region" description="Helical" evidence="1">
    <location>
        <begin position="305"/>
        <end position="325"/>
    </location>
</feature>
<feature type="topological domain" description="Cytoplasmic" evidence="1">
    <location>
        <begin position="326"/>
        <end position="353"/>
    </location>
</feature>
<feature type="domain" description="EamA 1">
    <location>
        <begin position="24"/>
        <end position="160"/>
    </location>
</feature>
<feature type="domain" description="EamA 2">
    <location>
        <begin position="200"/>
        <end position="326"/>
    </location>
</feature>
<reference key="1">
    <citation type="journal article" date="1997" name="Nature">
        <title>The nucleotide sequence of Saccharomyces cerevisiae chromosome XVI.</title>
        <authorList>
            <person name="Bussey H."/>
            <person name="Storms R.K."/>
            <person name="Ahmed A."/>
            <person name="Albermann K."/>
            <person name="Allen E."/>
            <person name="Ansorge W."/>
            <person name="Araujo R."/>
            <person name="Aparicio A."/>
            <person name="Barrell B.G."/>
            <person name="Badcock K."/>
            <person name="Benes V."/>
            <person name="Botstein D."/>
            <person name="Bowman S."/>
            <person name="Brueckner M."/>
            <person name="Carpenter J."/>
            <person name="Cherry J.M."/>
            <person name="Chung E."/>
            <person name="Churcher C.M."/>
            <person name="Coster F."/>
            <person name="Davis K."/>
            <person name="Davis R.W."/>
            <person name="Dietrich F.S."/>
            <person name="Delius H."/>
            <person name="DiPaolo T."/>
            <person name="Dubois E."/>
            <person name="Duesterhoeft A."/>
            <person name="Duncan M."/>
            <person name="Floeth M."/>
            <person name="Fortin N."/>
            <person name="Friesen J.D."/>
            <person name="Fritz C."/>
            <person name="Goffeau A."/>
            <person name="Hall J."/>
            <person name="Hebling U."/>
            <person name="Heumann K."/>
            <person name="Hilbert H."/>
            <person name="Hillier L.W."/>
            <person name="Hunicke-Smith S."/>
            <person name="Hyman R.W."/>
            <person name="Johnston M."/>
            <person name="Kalman S."/>
            <person name="Kleine K."/>
            <person name="Komp C."/>
            <person name="Kurdi O."/>
            <person name="Lashkari D."/>
            <person name="Lew H."/>
            <person name="Lin A."/>
            <person name="Lin D."/>
            <person name="Louis E.J."/>
            <person name="Marathe R."/>
            <person name="Messenguy F."/>
            <person name="Mewes H.-W."/>
            <person name="Mirtipati S."/>
            <person name="Moestl D."/>
            <person name="Mueller-Auer S."/>
            <person name="Namath A."/>
            <person name="Nentwich U."/>
            <person name="Oefner P."/>
            <person name="Pearson D."/>
            <person name="Petel F.X."/>
            <person name="Pohl T.M."/>
            <person name="Purnelle B."/>
            <person name="Rajandream M.A."/>
            <person name="Rechmann S."/>
            <person name="Rieger M."/>
            <person name="Riles L."/>
            <person name="Roberts D."/>
            <person name="Schaefer M."/>
            <person name="Scharfe M."/>
            <person name="Scherens B."/>
            <person name="Schramm S."/>
            <person name="Schroeder M."/>
            <person name="Sdicu A.-M."/>
            <person name="Tettelin H."/>
            <person name="Urrestarazu L.A."/>
            <person name="Ushinsky S."/>
            <person name="Vierendeels F."/>
            <person name="Vissers S."/>
            <person name="Voss H."/>
            <person name="Walsh S.V."/>
            <person name="Wambutt R."/>
            <person name="Wang Y."/>
            <person name="Wedler E."/>
            <person name="Wedler H."/>
            <person name="Winnett E."/>
            <person name="Zhong W.-W."/>
            <person name="Zollner A."/>
            <person name="Vo D.H."/>
            <person name="Hani J."/>
        </authorList>
    </citation>
    <scope>NUCLEOTIDE SEQUENCE [LARGE SCALE GENOMIC DNA]</scope>
    <source>
        <strain>ATCC 204508 / S288c</strain>
    </source>
</reference>
<reference key="2">
    <citation type="journal article" date="2014" name="G3 (Bethesda)">
        <title>The reference genome sequence of Saccharomyces cerevisiae: Then and now.</title>
        <authorList>
            <person name="Engel S.R."/>
            <person name="Dietrich F.S."/>
            <person name="Fisk D.G."/>
            <person name="Binkley G."/>
            <person name="Balakrishnan R."/>
            <person name="Costanzo M.C."/>
            <person name="Dwight S.S."/>
            <person name="Hitz B.C."/>
            <person name="Karra K."/>
            <person name="Nash R.S."/>
            <person name="Weng S."/>
            <person name="Wong E.D."/>
            <person name="Lloyd P."/>
            <person name="Skrzypek M.S."/>
            <person name="Miyasato S.R."/>
            <person name="Simison M."/>
            <person name="Cherry J.M."/>
        </authorList>
    </citation>
    <scope>GENOME REANNOTATION</scope>
    <source>
        <strain>ATCC 204508 / S288c</strain>
    </source>
</reference>
<reference key="3">
    <citation type="journal article" date="2007" name="Genome Res.">
        <title>Approaching a complete repository of sequence-verified protein-encoding clones for Saccharomyces cerevisiae.</title>
        <authorList>
            <person name="Hu Y."/>
            <person name="Rolfs A."/>
            <person name="Bhullar B."/>
            <person name="Murthy T.V.S."/>
            <person name="Zhu C."/>
            <person name="Berger M.F."/>
            <person name="Camargo A.A."/>
            <person name="Kelley F."/>
            <person name="McCarron S."/>
            <person name="Jepson D."/>
            <person name="Richardson A."/>
            <person name="Raphael J."/>
            <person name="Moreira D."/>
            <person name="Taycher E."/>
            <person name="Zuo D."/>
            <person name="Mohr S."/>
            <person name="Kane M.F."/>
            <person name="Williamson J."/>
            <person name="Simpson A.J.G."/>
            <person name="Bulyk M.L."/>
            <person name="Harlow E."/>
            <person name="Marsischky G."/>
            <person name="Kolodner R.D."/>
            <person name="LaBaer J."/>
        </authorList>
    </citation>
    <scope>NUCLEOTIDE SEQUENCE [GENOMIC DNA]</scope>
    <source>
        <strain>ATCC 204508 / S288c</strain>
    </source>
</reference>
<reference key="4">
    <citation type="journal article" date="2003" name="J. Biol. Chem.">
        <title>Topology models for 37 Saccharomyces cerevisiae membrane proteins based on C-terminal reporter fusions and predictions.</title>
        <authorList>
            <person name="Kim H."/>
            <person name="Melen K."/>
            <person name="von Heijne G."/>
        </authorList>
    </citation>
    <scope>TOPOLOGY</scope>
</reference>
<reference key="5">
    <citation type="journal article" date="2006" name="Proc. Natl. Acad. Sci. U.S.A.">
        <title>A global topology map of the Saccharomyces cerevisiae membrane proteome.</title>
        <authorList>
            <person name="Kim H."/>
            <person name="Melen K."/>
            <person name="Oesterberg M."/>
            <person name="von Heijne G."/>
        </authorList>
    </citation>
    <scope>TOPOLOGY [LARGE SCALE ANALYSIS]</scope>
    <source>
        <strain>ATCC 208353 / W303-1A</strain>
    </source>
</reference>